<protein>
    <recommendedName>
        <fullName evidence="1">Pyridoxine/pyridoxamine 5'-phosphate oxidase</fullName>
        <ecNumber evidence="1">1.4.3.5</ecNumber>
    </recommendedName>
    <alternativeName>
        <fullName evidence="1">PNP/PMP oxidase</fullName>
        <shortName evidence="1">PNPOx</shortName>
    </alternativeName>
    <alternativeName>
        <fullName evidence="1">Pyridoxal 5'-phosphate synthase</fullName>
    </alternativeName>
</protein>
<organism>
    <name type="scientific">Haemophilus ducreyi (strain 35000HP / ATCC 700724)</name>
    <dbReference type="NCBI Taxonomy" id="233412"/>
    <lineage>
        <taxon>Bacteria</taxon>
        <taxon>Pseudomonadati</taxon>
        <taxon>Pseudomonadota</taxon>
        <taxon>Gammaproteobacteria</taxon>
        <taxon>Pasteurellales</taxon>
        <taxon>Pasteurellaceae</taxon>
        <taxon>Haemophilus</taxon>
    </lineage>
</organism>
<reference key="1">
    <citation type="submission" date="2003-06" db="EMBL/GenBank/DDBJ databases">
        <title>The complete genome sequence of Haemophilus ducreyi.</title>
        <authorList>
            <person name="Munson R.S. Jr."/>
            <person name="Ray W.C."/>
            <person name="Mahairas G."/>
            <person name="Sabo P."/>
            <person name="Mungur R."/>
            <person name="Johnson L."/>
            <person name="Nguyen D."/>
            <person name="Wang J."/>
            <person name="Forst C."/>
            <person name="Hood L."/>
        </authorList>
    </citation>
    <scope>NUCLEOTIDE SEQUENCE [LARGE SCALE GENOMIC DNA]</scope>
    <source>
        <strain>35000HP / ATCC 700724</strain>
    </source>
</reference>
<feature type="chain" id="PRO_0000167710" description="Pyridoxine/pyridoxamine 5'-phosphate oxidase">
    <location>
        <begin position="1"/>
        <end position="209"/>
    </location>
</feature>
<feature type="binding site" evidence="1">
    <location>
        <begin position="7"/>
        <end position="10"/>
    </location>
    <ligand>
        <name>substrate</name>
    </ligand>
</feature>
<feature type="binding site" evidence="1">
    <location>
        <begin position="59"/>
        <end position="64"/>
    </location>
    <ligand>
        <name>FMN</name>
        <dbReference type="ChEBI" id="CHEBI:58210"/>
    </ligand>
</feature>
<feature type="binding site" evidence="1">
    <location>
        <position position="64"/>
    </location>
    <ligand>
        <name>substrate</name>
    </ligand>
</feature>
<feature type="binding site" evidence="1">
    <location>
        <begin position="74"/>
        <end position="75"/>
    </location>
    <ligand>
        <name>FMN</name>
        <dbReference type="ChEBI" id="CHEBI:58210"/>
    </ligand>
</feature>
<feature type="binding site" evidence="1">
    <location>
        <position position="81"/>
    </location>
    <ligand>
        <name>FMN</name>
        <dbReference type="ChEBI" id="CHEBI:58210"/>
    </ligand>
</feature>
<feature type="binding site" evidence="1">
    <location>
        <position position="121"/>
    </location>
    <ligand>
        <name>substrate</name>
    </ligand>
</feature>
<feature type="binding site" evidence="1">
    <location>
        <position position="125"/>
    </location>
    <ligand>
        <name>substrate</name>
    </ligand>
</feature>
<feature type="binding site" evidence="1">
    <location>
        <position position="129"/>
    </location>
    <ligand>
        <name>substrate</name>
    </ligand>
</feature>
<feature type="binding site" evidence="1">
    <location>
        <begin position="138"/>
        <end position="139"/>
    </location>
    <ligand>
        <name>FMN</name>
        <dbReference type="ChEBI" id="CHEBI:58210"/>
    </ligand>
</feature>
<feature type="binding site" evidence="1">
    <location>
        <position position="182"/>
    </location>
    <ligand>
        <name>FMN</name>
        <dbReference type="ChEBI" id="CHEBI:58210"/>
    </ligand>
</feature>
<feature type="binding site" evidence="1">
    <location>
        <position position="192"/>
    </location>
    <ligand>
        <name>FMN</name>
        <dbReference type="ChEBI" id="CHEBI:58210"/>
    </ligand>
</feature>
<accession>Q7VP83</accession>
<gene>
    <name evidence="1" type="primary">pdxH</name>
    <name type="ordered locus">HD_0214</name>
</gene>
<name>PDXH_HAEDU</name>
<proteinExistence type="inferred from homology"/>
<sequence>MDLHNIRADYTKQQLSKKECDANPMKQFERWLNEAIMAKVNEPTAMNMATVIDGKPTSRIVLLKEVDQQGFIFFTNYQSCKGWAIALNPYVALTFFWPELERSVRVEGIATKLSEQASDDYFASRPYASRIGAWASDQSQVLSSKRTLVAKVALLSAKYPLFVPRPAHWGGYLVQPTKIEFWQGRPSWLHDRICYWLVENEWLKERLSP</sequence>
<dbReference type="EC" id="1.4.3.5" evidence="1"/>
<dbReference type="EMBL" id="AE017143">
    <property type="protein sequence ID" value="AAP95204.1"/>
    <property type="molecule type" value="Genomic_DNA"/>
</dbReference>
<dbReference type="RefSeq" id="WP_010944257.1">
    <property type="nucleotide sequence ID" value="NC_002940.2"/>
</dbReference>
<dbReference type="SMR" id="Q7VP83"/>
<dbReference type="STRING" id="233412.HD_0214"/>
<dbReference type="KEGG" id="hdu:HD_0214"/>
<dbReference type="eggNOG" id="COG0259">
    <property type="taxonomic scope" value="Bacteria"/>
</dbReference>
<dbReference type="HOGENOM" id="CLU_032263_2_2_6"/>
<dbReference type="OrthoDB" id="9780392at2"/>
<dbReference type="UniPathway" id="UPA01068">
    <property type="reaction ID" value="UER00304"/>
</dbReference>
<dbReference type="UniPathway" id="UPA01068">
    <property type="reaction ID" value="UER00305"/>
</dbReference>
<dbReference type="Proteomes" id="UP000001022">
    <property type="component" value="Chromosome"/>
</dbReference>
<dbReference type="GO" id="GO:0010181">
    <property type="term" value="F:FMN binding"/>
    <property type="evidence" value="ECO:0007669"/>
    <property type="project" value="UniProtKB-UniRule"/>
</dbReference>
<dbReference type="GO" id="GO:0004733">
    <property type="term" value="F:pyridoxamine phosphate oxidase activity"/>
    <property type="evidence" value="ECO:0007669"/>
    <property type="project" value="UniProtKB-UniRule"/>
</dbReference>
<dbReference type="GO" id="GO:0008615">
    <property type="term" value="P:pyridoxine biosynthetic process"/>
    <property type="evidence" value="ECO:0007669"/>
    <property type="project" value="UniProtKB-KW"/>
</dbReference>
<dbReference type="FunFam" id="2.30.110.10:FF:000014">
    <property type="entry name" value="Pyridoxine/pyridoxamine 5'-phosphate oxidase"/>
    <property type="match status" value="1"/>
</dbReference>
<dbReference type="Gene3D" id="2.30.110.10">
    <property type="entry name" value="Electron Transport, Fmn-binding Protein, Chain A"/>
    <property type="match status" value="1"/>
</dbReference>
<dbReference type="HAMAP" id="MF_01629">
    <property type="entry name" value="PdxH"/>
    <property type="match status" value="1"/>
</dbReference>
<dbReference type="InterPro" id="IPR000659">
    <property type="entry name" value="Pyridox_Oxase"/>
</dbReference>
<dbReference type="InterPro" id="IPR019740">
    <property type="entry name" value="Pyridox_Oxase_CS"/>
</dbReference>
<dbReference type="InterPro" id="IPR011576">
    <property type="entry name" value="Pyridox_Oxase_N"/>
</dbReference>
<dbReference type="InterPro" id="IPR019576">
    <property type="entry name" value="Pyridoxamine_oxidase_dimer_C"/>
</dbReference>
<dbReference type="InterPro" id="IPR012349">
    <property type="entry name" value="Split_barrel_FMN-bd"/>
</dbReference>
<dbReference type="NCBIfam" id="TIGR00558">
    <property type="entry name" value="pdxH"/>
    <property type="match status" value="1"/>
</dbReference>
<dbReference type="NCBIfam" id="NF004231">
    <property type="entry name" value="PRK05679.1"/>
    <property type="match status" value="1"/>
</dbReference>
<dbReference type="PANTHER" id="PTHR10851:SF0">
    <property type="entry name" value="PYRIDOXINE-5'-PHOSPHATE OXIDASE"/>
    <property type="match status" value="1"/>
</dbReference>
<dbReference type="PANTHER" id="PTHR10851">
    <property type="entry name" value="PYRIDOXINE-5-PHOSPHATE OXIDASE"/>
    <property type="match status" value="1"/>
</dbReference>
<dbReference type="Pfam" id="PF10590">
    <property type="entry name" value="PNP_phzG_C"/>
    <property type="match status" value="1"/>
</dbReference>
<dbReference type="Pfam" id="PF01243">
    <property type="entry name" value="PNPOx_N"/>
    <property type="match status" value="1"/>
</dbReference>
<dbReference type="PIRSF" id="PIRSF000190">
    <property type="entry name" value="Pyd_amn-ph_oxd"/>
    <property type="match status" value="1"/>
</dbReference>
<dbReference type="SUPFAM" id="SSF50475">
    <property type="entry name" value="FMN-binding split barrel"/>
    <property type="match status" value="1"/>
</dbReference>
<dbReference type="PROSITE" id="PS01064">
    <property type="entry name" value="PYRIDOX_OXIDASE"/>
    <property type="match status" value="1"/>
</dbReference>
<evidence type="ECO:0000255" key="1">
    <source>
        <dbReference type="HAMAP-Rule" id="MF_01629"/>
    </source>
</evidence>
<keyword id="KW-0285">Flavoprotein</keyword>
<keyword id="KW-0288">FMN</keyword>
<keyword id="KW-0560">Oxidoreductase</keyword>
<keyword id="KW-0664">Pyridoxine biosynthesis</keyword>
<keyword id="KW-1185">Reference proteome</keyword>
<comment type="function">
    <text evidence="1">Catalyzes the oxidation of either pyridoxine 5'-phosphate (PNP) or pyridoxamine 5'-phosphate (PMP) into pyridoxal 5'-phosphate (PLP).</text>
</comment>
<comment type="catalytic activity">
    <reaction evidence="1">
        <text>pyridoxamine 5'-phosphate + O2 + H2O = pyridoxal 5'-phosphate + H2O2 + NH4(+)</text>
        <dbReference type="Rhea" id="RHEA:15817"/>
        <dbReference type="ChEBI" id="CHEBI:15377"/>
        <dbReference type="ChEBI" id="CHEBI:15379"/>
        <dbReference type="ChEBI" id="CHEBI:16240"/>
        <dbReference type="ChEBI" id="CHEBI:28938"/>
        <dbReference type="ChEBI" id="CHEBI:58451"/>
        <dbReference type="ChEBI" id="CHEBI:597326"/>
        <dbReference type="EC" id="1.4.3.5"/>
    </reaction>
</comment>
<comment type="catalytic activity">
    <reaction evidence="1">
        <text>pyridoxine 5'-phosphate + O2 = pyridoxal 5'-phosphate + H2O2</text>
        <dbReference type="Rhea" id="RHEA:15149"/>
        <dbReference type="ChEBI" id="CHEBI:15379"/>
        <dbReference type="ChEBI" id="CHEBI:16240"/>
        <dbReference type="ChEBI" id="CHEBI:58589"/>
        <dbReference type="ChEBI" id="CHEBI:597326"/>
        <dbReference type="EC" id="1.4.3.5"/>
    </reaction>
</comment>
<comment type="cofactor">
    <cofactor evidence="1">
        <name>FMN</name>
        <dbReference type="ChEBI" id="CHEBI:58210"/>
    </cofactor>
    <text evidence="1">Binds 1 FMN per subunit.</text>
</comment>
<comment type="pathway">
    <text evidence="1">Cofactor metabolism; pyridoxal 5'-phosphate salvage; pyridoxal 5'-phosphate from pyridoxamine 5'-phosphate: step 1/1.</text>
</comment>
<comment type="pathway">
    <text evidence="1">Cofactor metabolism; pyridoxal 5'-phosphate salvage; pyridoxal 5'-phosphate from pyridoxine 5'-phosphate: step 1/1.</text>
</comment>
<comment type="subunit">
    <text evidence="1">Homodimer.</text>
</comment>
<comment type="similarity">
    <text evidence="1">Belongs to the pyridoxamine 5'-phosphate oxidase family.</text>
</comment>